<organism>
    <name type="scientific">Xanthomonas euvesicatoria pv. vesicatoria (strain 85-10)</name>
    <name type="common">Xanthomonas campestris pv. vesicatoria</name>
    <dbReference type="NCBI Taxonomy" id="316273"/>
    <lineage>
        <taxon>Bacteria</taxon>
        <taxon>Pseudomonadati</taxon>
        <taxon>Pseudomonadota</taxon>
        <taxon>Gammaproteobacteria</taxon>
        <taxon>Lysobacterales</taxon>
        <taxon>Lysobacteraceae</taxon>
        <taxon>Xanthomonas</taxon>
    </lineage>
</organism>
<dbReference type="EMBL" id="AM039952">
    <property type="protein sequence ID" value="CAJ23195.1"/>
    <property type="molecule type" value="Genomic_DNA"/>
</dbReference>
<dbReference type="RefSeq" id="WP_003483633.1">
    <property type="nucleotide sequence ID" value="NZ_CP017190.1"/>
</dbReference>
<dbReference type="SMR" id="Q3BVB9"/>
<dbReference type="STRING" id="456327.BJD11_14815"/>
<dbReference type="GeneID" id="97509897"/>
<dbReference type="KEGG" id="xcv:XCV1563"/>
<dbReference type="eggNOG" id="COG0576">
    <property type="taxonomic scope" value="Bacteria"/>
</dbReference>
<dbReference type="HOGENOM" id="CLU_057217_6_0_6"/>
<dbReference type="Proteomes" id="UP000007069">
    <property type="component" value="Chromosome"/>
</dbReference>
<dbReference type="GO" id="GO:0005829">
    <property type="term" value="C:cytosol"/>
    <property type="evidence" value="ECO:0007669"/>
    <property type="project" value="TreeGrafter"/>
</dbReference>
<dbReference type="GO" id="GO:0000774">
    <property type="term" value="F:adenyl-nucleotide exchange factor activity"/>
    <property type="evidence" value="ECO:0007669"/>
    <property type="project" value="InterPro"/>
</dbReference>
<dbReference type="GO" id="GO:0042803">
    <property type="term" value="F:protein homodimerization activity"/>
    <property type="evidence" value="ECO:0007669"/>
    <property type="project" value="InterPro"/>
</dbReference>
<dbReference type="GO" id="GO:0051087">
    <property type="term" value="F:protein-folding chaperone binding"/>
    <property type="evidence" value="ECO:0007669"/>
    <property type="project" value="InterPro"/>
</dbReference>
<dbReference type="GO" id="GO:0051082">
    <property type="term" value="F:unfolded protein binding"/>
    <property type="evidence" value="ECO:0007669"/>
    <property type="project" value="TreeGrafter"/>
</dbReference>
<dbReference type="GO" id="GO:0006457">
    <property type="term" value="P:protein folding"/>
    <property type="evidence" value="ECO:0007669"/>
    <property type="project" value="InterPro"/>
</dbReference>
<dbReference type="CDD" id="cd00446">
    <property type="entry name" value="GrpE"/>
    <property type="match status" value="1"/>
</dbReference>
<dbReference type="FunFam" id="2.30.22.10:FF:000001">
    <property type="entry name" value="Protein GrpE"/>
    <property type="match status" value="1"/>
</dbReference>
<dbReference type="Gene3D" id="3.90.20.20">
    <property type="match status" value="1"/>
</dbReference>
<dbReference type="Gene3D" id="2.30.22.10">
    <property type="entry name" value="Head domain of nucleotide exchange factor GrpE"/>
    <property type="match status" value="1"/>
</dbReference>
<dbReference type="HAMAP" id="MF_01151">
    <property type="entry name" value="GrpE"/>
    <property type="match status" value="1"/>
</dbReference>
<dbReference type="InterPro" id="IPR000740">
    <property type="entry name" value="GrpE"/>
</dbReference>
<dbReference type="InterPro" id="IPR013805">
    <property type="entry name" value="GrpE_coiled_coil"/>
</dbReference>
<dbReference type="InterPro" id="IPR009012">
    <property type="entry name" value="GrpE_head"/>
</dbReference>
<dbReference type="NCBIfam" id="NF010738">
    <property type="entry name" value="PRK14140.1"/>
    <property type="match status" value="1"/>
</dbReference>
<dbReference type="NCBIfam" id="NF010745">
    <property type="entry name" value="PRK14147.1"/>
    <property type="match status" value="1"/>
</dbReference>
<dbReference type="PANTHER" id="PTHR21237">
    <property type="entry name" value="GRPE PROTEIN"/>
    <property type="match status" value="1"/>
</dbReference>
<dbReference type="PANTHER" id="PTHR21237:SF23">
    <property type="entry name" value="GRPE PROTEIN HOMOLOG, MITOCHONDRIAL"/>
    <property type="match status" value="1"/>
</dbReference>
<dbReference type="Pfam" id="PF01025">
    <property type="entry name" value="GrpE"/>
    <property type="match status" value="1"/>
</dbReference>
<dbReference type="PRINTS" id="PR00773">
    <property type="entry name" value="GRPEPROTEIN"/>
</dbReference>
<dbReference type="SUPFAM" id="SSF58014">
    <property type="entry name" value="Coiled-coil domain of nucleotide exchange factor GrpE"/>
    <property type="match status" value="1"/>
</dbReference>
<dbReference type="SUPFAM" id="SSF51064">
    <property type="entry name" value="Head domain of nucleotide exchange factor GrpE"/>
    <property type="match status" value="1"/>
</dbReference>
<dbReference type="PROSITE" id="PS01071">
    <property type="entry name" value="GRPE"/>
    <property type="match status" value="1"/>
</dbReference>
<reference key="1">
    <citation type="journal article" date="2005" name="J. Bacteriol.">
        <title>Insights into genome plasticity and pathogenicity of the plant pathogenic Bacterium Xanthomonas campestris pv. vesicatoria revealed by the complete genome sequence.</title>
        <authorList>
            <person name="Thieme F."/>
            <person name="Koebnik R."/>
            <person name="Bekel T."/>
            <person name="Berger C."/>
            <person name="Boch J."/>
            <person name="Buettner D."/>
            <person name="Caldana C."/>
            <person name="Gaigalat L."/>
            <person name="Goesmann A."/>
            <person name="Kay S."/>
            <person name="Kirchner O."/>
            <person name="Lanz C."/>
            <person name="Linke B."/>
            <person name="McHardy A.C."/>
            <person name="Meyer F."/>
            <person name="Mittenhuber G."/>
            <person name="Nies D.H."/>
            <person name="Niesbach-Kloesgen U."/>
            <person name="Patschkowski T."/>
            <person name="Rueckert C."/>
            <person name="Rupp O."/>
            <person name="Schneiker S."/>
            <person name="Schuster S.C."/>
            <person name="Vorhoelter F.J."/>
            <person name="Weber E."/>
            <person name="Puehler A."/>
            <person name="Bonas U."/>
            <person name="Bartels D."/>
            <person name="Kaiser O."/>
        </authorList>
    </citation>
    <scope>NUCLEOTIDE SEQUENCE [LARGE SCALE GENOMIC DNA]</scope>
    <source>
        <strain>85-10</strain>
    </source>
</reference>
<name>GRPE_XANE5</name>
<feature type="chain" id="PRO_1000053661" description="Protein GrpE">
    <location>
        <begin position="1"/>
        <end position="172"/>
    </location>
</feature>
<feature type="region of interest" description="Disordered" evidence="2">
    <location>
        <begin position="1"/>
        <end position="23"/>
    </location>
</feature>
<accession>Q3BVB9</accession>
<protein>
    <recommendedName>
        <fullName evidence="1">Protein GrpE</fullName>
    </recommendedName>
    <alternativeName>
        <fullName evidence="1">HSP-70 cofactor</fullName>
    </alternativeName>
</protein>
<comment type="function">
    <text evidence="1">Participates actively in the response to hyperosmotic and heat shock by preventing the aggregation of stress-denatured proteins, in association with DnaK and GrpE. It is the nucleotide exchange factor for DnaK and may function as a thermosensor. Unfolded proteins bind initially to DnaJ; upon interaction with the DnaJ-bound protein, DnaK hydrolyzes its bound ATP, resulting in the formation of a stable complex. GrpE releases ADP from DnaK; ATP binding to DnaK triggers the release of the substrate protein, thus completing the reaction cycle. Several rounds of ATP-dependent interactions between DnaJ, DnaK and GrpE are required for fully efficient folding.</text>
</comment>
<comment type="subunit">
    <text evidence="1">Homodimer.</text>
</comment>
<comment type="subcellular location">
    <subcellularLocation>
        <location evidence="1">Cytoplasm</location>
    </subcellularLocation>
</comment>
<comment type="similarity">
    <text evidence="1">Belongs to the GrpE family.</text>
</comment>
<sequence length="172" mass="18938">MNQDHPEFDSEDLSQNPPETDPLKAEIESLRSEIALVKADALRERADLENQRKRIARDVENARKFANEKLLGELLPVFDSLDAGLTAAGTEPSPLRDGLDMTYKQLLKVAADNGLTLLDPVGQPFNPDQHQAISQGEAEGVAPGHVVQVFQKGYLLNDRLLRPALVVVAKHD</sequence>
<keyword id="KW-0143">Chaperone</keyword>
<keyword id="KW-0963">Cytoplasm</keyword>
<keyword id="KW-0346">Stress response</keyword>
<evidence type="ECO:0000255" key="1">
    <source>
        <dbReference type="HAMAP-Rule" id="MF_01151"/>
    </source>
</evidence>
<evidence type="ECO:0000256" key="2">
    <source>
        <dbReference type="SAM" id="MobiDB-lite"/>
    </source>
</evidence>
<proteinExistence type="inferred from homology"/>
<gene>
    <name evidence="1" type="primary">grpE</name>
    <name type="ordered locus">XCV1563</name>
</gene>